<feature type="chain" id="PRO_0000167478" description="Ribosome-recycling factor">
    <location>
        <begin position="1"/>
        <end position="185"/>
    </location>
</feature>
<comment type="function">
    <text evidence="1">Responsible for the release of ribosomes from messenger RNA at the termination of protein biosynthesis. May increase the efficiency of translation by recycling ribosomes from one round of translation to another.</text>
</comment>
<comment type="subcellular location">
    <subcellularLocation>
        <location evidence="1">Cytoplasm</location>
    </subcellularLocation>
</comment>
<comment type="similarity">
    <text evidence="1">Belongs to the RRF family.</text>
</comment>
<organism>
    <name type="scientific">Legionella pneumophila (strain Paris)</name>
    <dbReference type="NCBI Taxonomy" id="297246"/>
    <lineage>
        <taxon>Bacteria</taxon>
        <taxon>Pseudomonadati</taxon>
        <taxon>Pseudomonadota</taxon>
        <taxon>Gammaproteobacteria</taxon>
        <taxon>Legionellales</taxon>
        <taxon>Legionellaceae</taxon>
        <taxon>Legionella</taxon>
    </lineage>
</organism>
<sequence>MINEIKQDSEKRMKKTIEALHSDMSKIRTGRANASLLDHVMVDYYGSPTPLSQVANITTSDSRTILVTPWEKSMVAAIEKAILNSDLGLNPATAGTAIRVPMPPLTEERRKELIKVVRHEGEQGRVSIRNIRRDANNQLKELVKEKAISEDDERRAAEAIQKLTDRYISEVDAVLAEKEKDLMEI</sequence>
<gene>
    <name evidence="1" type="primary">frr</name>
    <name type="ordered locus">lpp1676</name>
</gene>
<name>RRF_LEGPA</name>
<accession>Q5X4K0</accession>
<dbReference type="EMBL" id="CR628336">
    <property type="protein sequence ID" value="CAH12828.1"/>
    <property type="molecule type" value="Genomic_DNA"/>
</dbReference>
<dbReference type="RefSeq" id="WP_011213982.1">
    <property type="nucleotide sequence ID" value="NC_006368.1"/>
</dbReference>
<dbReference type="SMR" id="Q5X4K0"/>
<dbReference type="KEGG" id="lpp:lpp1676"/>
<dbReference type="LegioList" id="lpp1676"/>
<dbReference type="HOGENOM" id="CLU_073981_2_1_6"/>
<dbReference type="GO" id="GO:0005829">
    <property type="term" value="C:cytosol"/>
    <property type="evidence" value="ECO:0007669"/>
    <property type="project" value="GOC"/>
</dbReference>
<dbReference type="GO" id="GO:0043023">
    <property type="term" value="F:ribosomal large subunit binding"/>
    <property type="evidence" value="ECO:0007669"/>
    <property type="project" value="TreeGrafter"/>
</dbReference>
<dbReference type="GO" id="GO:0002184">
    <property type="term" value="P:cytoplasmic translational termination"/>
    <property type="evidence" value="ECO:0007669"/>
    <property type="project" value="TreeGrafter"/>
</dbReference>
<dbReference type="CDD" id="cd00520">
    <property type="entry name" value="RRF"/>
    <property type="match status" value="1"/>
</dbReference>
<dbReference type="FunFam" id="1.10.132.20:FF:000001">
    <property type="entry name" value="Ribosome-recycling factor"/>
    <property type="match status" value="1"/>
</dbReference>
<dbReference type="FunFam" id="3.30.1360.40:FF:000001">
    <property type="entry name" value="Ribosome-recycling factor"/>
    <property type="match status" value="1"/>
</dbReference>
<dbReference type="Gene3D" id="3.30.1360.40">
    <property type="match status" value="1"/>
</dbReference>
<dbReference type="Gene3D" id="1.10.132.20">
    <property type="entry name" value="Ribosome-recycling factor"/>
    <property type="match status" value="1"/>
</dbReference>
<dbReference type="HAMAP" id="MF_00040">
    <property type="entry name" value="RRF"/>
    <property type="match status" value="1"/>
</dbReference>
<dbReference type="InterPro" id="IPR002661">
    <property type="entry name" value="Ribosome_recyc_fac"/>
</dbReference>
<dbReference type="InterPro" id="IPR023584">
    <property type="entry name" value="Ribosome_recyc_fac_dom"/>
</dbReference>
<dbReference type="InterPro" id="IPR036191">
    <property type="entry name" value="RRF_sf"/>
</dbReference>
<dbReference type="NCBIfam" id="TIGR00496">
    <property type="entry name" value="frr"/>
    <property type="match status" value="1"/>
</dbReference>
<dbReference type="PANTHER" id="PTHR20982:SF3">
    <property type="entry name" value="MITOCHONDRIAL RIBOSOME RECYCLING FACTOR PSEUDO 1"/>
    <property type="match status" value="1"/>
</dbReference>
<dbReference type="PANTHER" id="PTHR20982">
    <property type="entry name" value="RIBOSOME RECYCLING FACTOR"/>
    <property type="match status" value="1"/>
</dbReference>
<dbReference type="Pfam" id="PF01765">
    <property type="entry name" value="RRF"/>
    <property type="match status" value="1"/>
</dbReference>
<dbReference type="SUPFAM" id="SSF55194">
    <property type="entry name" value="Ribosome recycling factor, RRF"/>
    <property type="match status" value="1"/>
</dbReference>
<evidence type="ECO:0000255" key="1">
    <source>
        <dbReference type="HAMAP-Rule" id="MF_00040"/>
    </source>
</evidence>
<protein>
    <recommendedName>
        <fullName evidence="1">Ribosome-recycling factor</fullName>
        <shortName evidence="1">RRF</shortName>
    </recommendedName>
    <alternativeName>
        <fullName evidence="1">Ribosome-releasing factor</fullName>
    </alternativeName>
</protein>
<keyword id="KW-0963">Cytoplasm</keyword>
<keyword id="KW-0648">Protein biosynthesis</keyword>
<reference key="1">
    <citation type="journal article" date="2004" name="Nat. Genet.">
        <title>Evidence in the Legionella pneumophila genome for exploitation of host cell functions and high genome plasticity.</title>
        <authorList>
            <person name="Cazalet C."/>
            <person name="Rusniok C."/>
            <person name="Brueggemann H."/>
            <person name="Zidane N."/>
            <person name="Magnier A."/>
            <person name="Ma L."/>
            <person name="Tichit M."/>
            <person name="Jarraud S."/>
            <person name="Bouchier C."/>
            <person name="Vandenesch F."/>
            <person name="Kunst F."/>
            <person name="Etienne J."/>
            <person name="Glaser P."/>
            <person name="Buchrieser C."/>
        </authorList>
    </citation>
    <scope>NUCLEOTIDE SEQUENCE [LARGE SCALE GENOMIC DNA]</scope>
    <source>
        <strain>Paris</strain>
    </source>
</reference>
<proteinExistence type="inferred from homology"/>